<feature type="chain" id="PRO_0000241381" description="Large ribosomal subunit protein uL3">
    <location>
        <begin position="1"/>
        <end position="236"/>
    </location>
</feature>
<feature type="region of interest" description="Disordered" evidence="2">
    <location>
        <begin position="139"/>
        <end position="165"/>
    </location>
</feature>
<feature type="compositionally biased region" description="Low complexity" evidence="2">
    <location>
        <begin position="139"/>
        <end position="149"/>
    </location>
</feature>
<feature type="modified residue" description="N5-methylglutamine" evidence="1">
    <location>
        <position position="152"/>
    </location>
</feature>
<organism>
    <name type="scientific">Pelagibacter ubique (strain HTCC1062)</name>
    <dbReference type="NCBI Taxonomy" id="335992"/>
    <lineage>
        <taxon>Bacteria</taxon>
        <taxon>Pseudomonadati</taxon>
        <taxon>Pseudomonadota</taxon>
        <taxon>Alphaproteobacteria</taxon>
        <taxon>Candidatus Pelagibacterales</taxon>
        <taxon>Candidatus Pelagibacteraceae</taxon>
        <taxon>Candidatus Pelagibacter</taxon>
    </lineage>
</organism>
<reference key="1">
    <citation type="journal article" date="2005" name="Science">
        <title>Genome streamlining in a cosmopolitan oceanic bacterium.</title>
        <authorList>
            <person name="Giovannoni S.J."/>
            <person name="Tripp H.J."/>
            <person name="Givan S."/>
            <person name="Podar M."/>
            <person name="Vergin K.L."/>
            <person name="Baptista D."/>
            <person name="Bibbs L."/>
            <person name="Eads J."/>
            <person name="Richardson T.H."/>
            <person name="Noordewier M."/>
            <person name="Rappe M.S."/>
            <person name="Short J.M."/>
            <person name="Carrington J.C."/>
            <person name="Mathur E.J."/>
        </authorList>
    </citation>
    <scope>NUCLEOTIDE SEQUENCE [LARGE SCALE GENOMIC DNA]</scope>
    <source>
        <strain>HTCC1062</strain>
    </source>
</reference>
<name>RL3_PELUB</name>
<gene>
    <name evidence="1" type="primary">rplC</name>
    <name type="ordered locus">SAR11_1117</name>
</gene>
<protein>
    <recommendedName>
        <fullName evidence="1">Large ribosomal subunit protein uL3</fullName>
    </recommendedName>
    <alternativeName>
        <fullName evidence="3">50S ribosomal protein L3</fullName>
    </alternativeName>
</protein>
<dbReference type="EMBL" id="CP000084">
    <property type="protein sequence ID" value="AAZ21920.1"/>
    <property type="molecule type" value="Genomic_DNA"/>
</dbReference>
<dbReference type="RefSeq" id="WP_011282157.1">
    <property type="nucleotide sequence ID" value="NC_007205.1"/>
</dbReference>
<dbReference type="SMR" id="Q4FLL8"/>
<dbReference type="STRING" id="335992.SAR11_1117"/>
<dbReference type="GeneID" id="66295606"/>
<dbReference type="KEGG" id="pub:SAR11_1117"/>
<dbReference type="eggNOG" id="COG0087">
    <property type="taxonomic scope" value="Bacteria"/>
</dbReference>
<dbReference type="HOGENOM" id="CLU_044142_2_0_5"/>
<dbReference type="OrthoDB" id="9806135at2"/>
<dbReference type="Proteomes" id="UP000002528">
    <property type="component" value="Chromosome"/>
</dbReference>
<dbReference type="GO" id="GO:0022625">
    <property type="term" value="C:cytosolic large ribosomal subunit"/>
    <property type="evidence" value="ECO:0007669"/>
    <property type="project" value="TreeGrafter"/>
</dbReference>
<dbReference type="GO" id="GO:0019843">
    <property type="term" value="F:rRNA binding"/>
    <property type="evidence" value="ECO:0007669"/>
    <property type="project" value="UniProtKB-UniRule"/>
</dbReference>
<dbReference type="GO" id="GO:0003735">
    <property type="term" value="F:structural constituent of ribosome"/>
    <property type="evidence" value="ECO:0007669"/>
    <property type="project" value="InterPro"/>
</dbReference>
<dbReference type="GO" id="GO:0006412">
    <property type="term" value="P:translation"/>
    <property type="evidence" value="ECO:0007669"/>
    <property type="project" value="UniProtKB-UniRule"/>
</dbReference>
<dbReference type="FunFam" id="2.40.30.10:FF:000004">
    <property type="entry name" value="50S ribosomal protein L3"/>
    <property type="match status" value="1"/>
</dbReference>
<dbReference type="FunFam" id="3.30.160.810:FF:000001">
    <property type="entry name" value="50S ribosomal protein L3"/>
    <property type="match status" value="1"/>
</dbReference>
<dbReference type="Gene3D" id="3.30.160.810">
    <property type="match status" value="1"/>
</dbReference>
<dbReference type="Gene3D" id="2.40.30.10">
    <property type="entry name" value="Translation factors"/>
    <property type="match status" value="1"/>
</dbReference>
<dbReference type="HAMAP" id="MF_01325_B">
    <property type="entry name" value="Ribosomal_uL3_B"/>
    <property type="match status" value="1"/>
</dbReference>
<dbReference type="InterPro" id="IPR000597">
    <property type="entry name" value="Ribosomal_uL3"/>
</dbReference>
<dbReference type="InterPro" id="IPR019927">
    <property type="entry name" value="Ribosomal_uL3_bac/org-type"/>
</dbReference>
<dbReference type="InterPro" id="IPR019926">
    <property type="entry name" value="Ribosomal_uL3_CS"/>
</dbReference>
<dbReference type="InterPro" id="IPR009000">
    <property type="entry name" value="Transl_B-barrel_sf"/>
</dbReference>
<dbReference type="NCBIfam" id="TIGR03625">
    <property type="entry name" value="L3_bact"/>
    <property type="match status" value="1"/>
</dbReference>
<dbReference type="PANTHER" id="PTHR11229">
    <property type="entry name" value="50S RIBOSOMAL PROTEIN L3"/>
    <property type="match status" value="1"/>
</dbReference>
<dbReference type="PANTHER" id="PTHR11229:SF16">
    <property type="entry name" value="LARGE RIBOSOMAL SUBUNIT PROTEIN UL3C"/>
    <property type="match status" value="1"/>
</dbReference>
<dbReference type="Pfam" id="PF00297">
    <property type="entry name" value="Ribosomal_L3"/>
    <property type="match status" value="1"/>
</dbReference>
<dbReference type="SUPFAM" id="SSF50447">
    <property type="entry name" value="Translation proteins"/>
    <property type="match status" value="1"/>
</dbReference>
<dbReference type="PROSITE" id="PS00474">
    <property type="entry name" value="RIBOSOMAL_L3"/>
    <property type="match status" value="1"/>
</dbReference>
<accession>Q4FLL8</accession>
<evidence type="ECO:0000255" key="1">
    <source>
        <dbReference type="HAMAP-Rule" id="MF_01325"/>
    </source>
</evidence>
<evidence type="ECO:0000256" key="2">
    <source>
        <dbReference type="SAM" id="MobiDB-lite"/>
    </source>
</evidence>
<evidence type="ECO:0000305" key="3"/>
<keyword id="KW-0488">Methylation</keyword>
<keyword id="KW-1185">Reference proteome</keyword>
<keyword id="KW-0687">Ribonucleoprotein</keyword>
<keyword id="KW-0689">Ribosomal protein</keyword>
<keyword id="KW-0694">RNA-binding</keyword>
<keyword id="KW-0699">rRNA-binding</keyword>
<sequence>MSEIALIGKKIGMTREFYKTGRLVPVTVIKMEKARVIQVIEEEKRGYKAVQLGFGKIKASKLTKAMKGLYAKKNTEAKKKLKEFRVKDTELYKEGNEFGLEIFNEVKFVDTTSKTIGKGFAGAMKRHNFGGLRATHGVSVSHRSHGSTGQRQDPGKVFKGKKMAGHMGDRVRTMQNLEIIKTDIENELLYLKGSIPGSKNTEILVKKSVKVINKMTINEKIAAAEEAKKTPDKKKK</sequence>
<comment type="function">
    <text evidence="1">One of the primary rRNA binding proteins, it binds directly near the 3'-end of the 23S rRNA, where it nucleates assembly of the 50S subunit.</text>
</comment>
<comment type="subunit">
    <text evidence="1">Part of the 50S ribosomal subunit. Forms a cluster with proteins L14 and L19.</text>
</comment>
<comment type="PTM">
    <text evidence="1">Methylated by PrmB.</text>
</comment>
<comment type="similarity">
    <text evidence="1">Belongs to the universal ribosomal protein uL3 family.</text>
</comment>
<proteinExistence type="inferred from homology"/>